<accession>Q2J3I1</accession>
<evidence type="ECO:0000255" key="1">
    <source>
        <dbReference type="HAMAP-Rule" id="MF_01416"/>
    </source>
</evidence>
<feature type="chain" id="PRO_1000184779" description="ATP synthase subunit delta">
    <location>
        <begin position="1"/>
        <end position="186"/>
    </location>
</feature>
<sequence length="186" mass="19538">MASEDPSVSGVSGRYATALFELARDEKVVDAVTADLDKFKAMLADSPDLLRLVRSPVFGAEAQAKALGAVLDKAGITGISANFLKLLAANRRLFVVADVIRAYRALVAKFKGEATADVTVAETLGDKNLEALKAALKAVTGKDVTLNINVDPAIIGGLVVKLGSRMVDSSIRTKLNSIKHAMKEAG</sequence>
<reference key="1">
    <citation type="submission" date="2006-01" db="EMBL/GenBank/DDBJ databases">
        <title>Complete sequence of Rhodopseudomonas palustris HaA2.</title>
        <authorList>
            <consortium name="US DOE Joint Genome Institute"/>
            <person name="Copeland A."/>
            <person name="Lucas S."/>
            <person name="Lapidus A."/>
            <person name="Barry K."/>
            <person name="Detter J.C."/>
            <person name="Glavina T."/>
            <person name="Hammon N."/>
            <person name="Israni S."/>
            <person name="Pitluck S."/>
            <person name="Chain P."/>
            <person name="Malfatti S."/>
            <person name="Shin M."/>
            <person name="Vergez L."/>
            <person name="Schmutz J."/>
            <person name="Larimer F."/>
            <person name="Land M."/>
            <person name="Hauser L."/>
            <person name="Pelletier D.A."/>
            <person name="Kyrpides N."/>
            <person name="Anderson I."/>
            <person name="Oda Y."/>
            <person name="Harwood C.S."/>
            <person name="Richardson P."/>
        </authorList>
    </citation>
    <scope>NUCLEOTIDE SEQUENCE [LARGE SCALE GENOMIC DNA]</scope>
    <source>
        <strain>HaA2</strain>
    </source>
</reference>
<proteinExistence type="inferred from homology"/>
<name>ATPD_RHOP2</name>
<gene>
    <name evidence="1" type="primary">atpH</name>
    <name type="ordered locus">RPB_0268</name>
</gene>
<comment type="function">
    <text evidence="1">F(1)F(0) ATP synthase produces ATP from ADP in the presence of a proton or sodium gradient. F-type ATPases consist of two structural domains, F(1) containing the extramembraneous catalytic core and F(0) containing the membrane proton channel, linked together by a central stalk and a peripheral stalk. During catalysis, ATP synthesis in the catalytic domain of F(1) is coupled via a rotary mechanism of the central stalk subunits to proton translocation.</text>
</comment>
<comment type="function">
    <text evidence="1">This protein is part of the stalk that links CF(0) to CF(1). It either transmits conformational changes from CF(0) to CF(1) or is implicated in proton conduction.</text>
</comment>
<comment type="subunit">
    <text evidence="1">F-type ATPases have 2 components, F(1) - the catalytic core - and F(0) - the membrane proton channel. F(1) has five subunits: alpha(3), beta(3), gamma(1), delta(1), epsilon(1). CF(0) has four main subunits: a(1), b(1), b'(1) and c(10-14). The alpha and beta chains form an alternating ring which encloses part of the gamma chain. F(1) is attached to F(0) by a central stalk formed by the gamma and epsilon chains, while a peripheral stalk is formed by the delta, b and b' chains.</text>
</comment>
<comment type="subcellular location">
    <subcellularLocation>
        <location evidence="1">Cell inner membrane</location>
        <topology evidence="1">Peripheral membrane protein</topology>
    </subcellularLocation>
</comment>
<comment type="similarity">
    <text evidence="1">Belongs to the ATPase delta chain family.</text>
</comment>
<organism>
    <name type="scientific">Rhodopseudomonas palustris (strain HaA2)</name>
    <dbReference type="NCBI Taxonomy" id="316058"/>
    <lineage>
        <taxon>Bacteria</taxon>
        <taxon>Pseudomonadati</taxon>
        <taxon>Pseudomonadota</taxon>
        <taxon>Alphaproteobacteria</taxon>
        <taxon>Hyphomicrobiales</taxon>
        <taxon>Nitrobacteraceae</taxon>
        <taxon>Rhodopseudomonas</taxon>
    </lineage>
</organism>
<keyword id="KW-0066">ATP synthesis</keyword>
<keyword id="KW-0997">Cell inner membrane</keyword>
<keyword id="KW-1003">Cell membrane</keyword>
<keyword id="KW-0139">CF(1)</keyword>
<keyword id="KW-0375">Hydrogen ion transport</keyword>
<keyword id="KW-0406">Ion transport</keyword>
<keyword id="KW-0472">Membrane</keyword>
<keyword id="KW-1185">Reference proteome</keyword>
<keyword id="KW-0813">Transport</keyword>
<dbReference type="EMBL" id="CP000250">
    <property type="protein sequence ID" value="ABD04979.1"/>
    <property type="molecule type" value="Genomic_DNA"/>
</dbReference>
<dbReference type="RefSeq" id="WP_011439169.1">
    <property type="nucleotide sequence ID" value="NC_007778.1"/>
</dbReference>
<dbReference type="SMR" id="Q2J3I1"/>
<dbReference type="STRING" id="316058.RPB_0268"/>
<dbReference type="KEGG" id="rpb:RPB_0268"/>
<dbReference type="eggNOG" id="COG0712">
    <property type="taxonomic scope" value="Bacteria"/>
</dbReference>
<dbReference type="HOGENOM" id="CLU_085114_0_1_5"/>
<dbReference type="OrthoDB" id="9796185at2"/>
<dbReference type="Proteomes" id="UP000008809">
    <property type="component" value="Chromosome"/>
</dbReference>
<dbReference type="GO" id="GO:0005886">
    <property type="term" value="C:plasma membrane"/>
    <property type="evidence" value="ECO:0007669"/>
    <property type="project" value="UniProtKB-SubCell"/>
</dbReference>
<dbReference type="GO" id="GO:0045259">
    <property type="term" value="C:proton-transporting ATP synthase complex"/>
    <property type="evidence" value="ECO:0007669"/>
    <property type="project" value="UniProtKB-KW"/>
</dbReference>
<dbReference type="GO" id="GO:0046933">
    <property type="term" value="F:proton-transporting ATP synthase activity, rotational mechanism"/>
    <property type="evidence" value="ECO:0007669"/>
    <property type="project" value="UniProtKB-UniRule"/>
</dbReference>
<dbReference type="Gene3D" id="1.10.520.20">
    <property type="entry name" value="N-terminal domain of the delta subunit of the F1F0-ATP synthase"/>
    <property type="match status" value="1"/>
</dbReference>
<dbReference type="HAMAP" id="MF_01416">
    <property type="entry name" value="ATP_synth_delta_bact"/>
    <property type="match status" value="1"/>
</dbReference>
<dbReference type="InterPro" id="IPR026015">
    <property type="entry name" value="ATP_synth_OSCP/delta_N_sf"/>
</dbReference>
<dbReference type="InterPro" id="IPR020781">
    <property type="entry name" value="ATPase_OSCP/d_CS"/>
</dbReference>
<dbReference type="InterPro" id="IPR000711">
    <property type="entry name" value="ATPase_OSCP/dsu"/>
</dbReference>
<dbReference type="NCBIfam" id="TIGR01145">
    <property type="entry name" value="ATP_synt_delta"/>
    <property type="match status" value="1"/>
</dbReference>
<dbReference type="NCBIfam" id="NF004406">
    <property type="entry name" value="PRK05758.3-2"/>
    <property type="match status" value="1"/>
</dbReference>
<dbReference type="PANTHER" id="PTHR11910">
    <property type="entry name" value="ATP SYNTHASE DELTA CHAIN"/>
    <property type="match status" value="1"/>
</dbReference>
<dbReference type="Pfam" id="PF00213">
    <property type="entry name" value="OSCP"/>
    <property type="match status" value="1"/>
</dbReference>
<dbReference type="PRINTS" id="PR00125">
    <property type="entry name" value="ATPASEDELTA"/>
</dbReference>
<dbReference type="SUPFAM" id="SSF47928">
    <property type="entry name" value="N-terminal domain of the delta subunit of the F1F0-ATP synthase"/>
    <property type="match status" value="1"/>
</dbReference>
<dbReference type="PROSITE" id="PS00389">
    <property type="entry name" value="ATPASE_DELTA"/>
    <property type="match status" value="1"/>
</dbReference>
<protein>
    <recommendedName>
        <fullName evidence="1">ATP synthase subunit delta</fullName>
    </recommendedName>
    <alternativeName>
        <fullName evidence="1">ATP synthase F(1) sector subunit delta</fullName>
    </alternativeName>
    <alternativeName>
        <fullName evidence="1">F-type ATPase subunit delta</fullName>
        <shortName evidence="1">F-ATPase subunit delta</shortName>
    </alternativeName>
</protein>